<accession>Q6AEW2</accession>
<name>SYL_LEIXX</name>
<feature type="chain" id="PRO_0000152034" description="Leucine--tRNA ligase">
    <location>
        <begin position="1"/>
        <end position="866"/>
    </location>
</feature>
<feature type="region of interest" description="Disordered" evidence="2">
    <location>
        <begin position="393"/>
        <end position="421"/>
    </location>
</feature>
<feature type="short sequence motif" description="'HIGH' region">
    <location>
        <begin position="59"/>
        <end position="69"/>
    </location>
</feature>
<feature type="short sequence motif" description="'KMSKS' region">
    <location>
        <begin position="628"/>
        <end position="632"/>
    </location>
</feature>
<feature type="compositionally biased region" description="Low complexity" evidence="2">
    <location>
        <begin position="404"/>
        <end position="418"/>
    </location>
</feature>
<feature type="binding site" evidence="1">
    <location>
        <position position="631"/>
    </location>
    <ligand>
        <name>ATP</name>
        <dbReference type="ChEBI" id="CHEBI:30616"/>
    </ligand>
</feature>
<proteinExistence type="inferred from homology"/>
<reference key="1">
    <citation type="journal article" date="2004" name="Mol. Plant Microbe Interact.">
        <title>The genome sequence of the Gram-positive sugarcane pathogen Leifsonia xyli subsp. xyli.</title>
        <authorList>
            <person name="Monteiro-Vitorello C.B."/>
            <person name="Camargo L.E.A."/>
            <person name="Van Sluys M.A."/>
            <person name="Kitajima J.P."/>
            <person name="Truffi D."/>
            <person name="do Amaral A.M."/>
            <person name="Harakava R."/>
            <person name="de Oliveira J.C.F."/>
            <person name="Wood D."/>
            <person name="de Oliveira M.C."/>
            <person name="Miyaki C.Y."/>
            <person name="Takita M.A."/>
            <person name="da Silva A.C.R."/>
            <person name="Furlan L.R."/>
            <person name="Carraro D.M."/>
            <person name="Camarotte G."/>
            <person name="Almeida N.F. Jr."/>
            <person name="Carrer H."/>
            <person name="Coutinho L.L."/>
            <person name="El-Dorry H.A."/>
            <person name="Ferro M.I.T."/>
            <person name="Gagliardi P.R."/>
            <person name="Giglioti E."/>
            <person name="Goldman M.H.S."/>
            <person name="Goldman G.H."/>
            <person name="Kimura E.T."/>
            <person name="Ferro E.S."/>
            <person name="Kuramae E.E."/>
            <person name="Lemos E.G.M."/>
            <person name="Lemos M.V.F."/>
            <person name="Mauro S.M.Z."/>
            <person name="Machado M.A."/>
            <person name="Marino C.L."/>
            <person name="Menck C.F."/>
            <person name="Nunes L.R."/>
            <person name="Oliveira R.C."/>
            <person name="Pereira G.G."/>
            <person name="Siqueira W."/>
            <person name="de Souza A.A."/>
            <person name="Tsai S.M."/>
            <person name="Zanca A.S."/>
            <person name="Simpson A.J.G."/>
            <person name="Brumbley S.M."/>
            <person name="Setubal J.C."/>
        </authorList>
    </citation>
    <scope>NUCLEOTIDE SEQUENCE [LARGE SCALE GENOMIC DNA]</scope>
    <source>
        <strain>CTCB07</strain>
    </source>
</reference>
<comment type="catalytic activity">
    <reaction evidence="1">
        <text>tRNA(Leu) + L-leucine + ATP = L-leucyl-tRNA(Leu) + AMP + diphosphate</text>
        <dbReference type="Rhea" id="RHEA:11688"/>
        <dbReference type="Rhea" id="RHEA-COMP:9613"/>
        <dbReference type="Rhea" id="RHEA-COMP:9622"/>
        <dbReference type="ChEBI" id="CHEBI:30616"/>
        <dbReference type="ChEBI" id="CHEBI:33019"/>
        <dbReference type="ChEBI" id="CHEBI:57427"/>
        <dbReference type="ChEBI" id="CHEBI:78442"/>
        <dbReference type="ChEBI" id="CHEBI:78494"/>
        <dbReference type="ChEBI" id="CHEBI:456215"/>
        <dbReference type="EC" id="6.1.1.4"/>
    </reaction>
</comment>
<comment type="subcellular location">
    <subcellularLocation>
        <location evidence="1">Cytoplasm</location>
    </subcellularLocation>
</comment>
<comment type="similarity">
    <text evidence="1">Belongs to the class-I aminoacyl-tRNA synthetase family.</text>
</comment>
<gene>
    <name evidence="1" type="primary">leuS</name>
    <name type="ordered locus">Lxx12370</name>
</gene>
<sequence>MAHQHDTGTAAAAAGKTAIHYDFAQIQAKWLPVWEKLKPFATDDPEDNRPRKYVLDMFPYPSGDLHMGHAEAYALGDVIARYWRHQGFSVLHPIGWDAFGLPAENAAIKRGLDPRGWTYDNIAQQKASMRRYAPSFDWDRVLQTCDPSYYKWNQWLFLKLYEKGLAYRKASQVNWCPFDQTVLANEQVVNGRCERCDNLVTKKKLTQWYFRITDYADRLLDDLNQLEGAWPAKVILMQRNWIGRSTGADVQFAIEGREEPVAVYTTRPDTLYGVTFMVVAPDSELAAELAEDARPEVKQRFEEYLAAVRGTTEMDRLSTEREKTGVFLERHAVNPLTGESIPIWAADYVLSDYGHGAIMAVPAHDQRDLDFARAFDLPVRVVVDTTQPATGAVPVIKTDPQTGEPLLPESAPLESPAETGQALTGEGRLINSGPFDGLSKSNAIRRVTEALQGSGLGAPAKNFRLRDWLISRQRYWGTPIPIVHCEACGEVPVPESELPVLLPPAEGLDLQPKGRSPLGAASDWVNVSCFSCGGPAQRDTDTMDTFVDSSWYFLRFLNPNDDTRAFDPREAEKWAPVDQYVGGVTHAILHLLYSRFITKVLFDQGFVSFTEPFTVLLNQGMVLMDGSAMSKSRGNLVKLSDQLDAHGVDAVRLTMSFAGPPEDDIDWADVSPSGSAKFLARAWRVAHDVTSAPDVVWKSGDPALRRVTHRFLADTPGLVEAFKFNVVVARLMELVNATRKTIDSGAGPADRAVREAAEVTTMALNLFAPYTAEDMWARLGYEPSVSLVPWRKPDPTLLIEEAVTAIVQVDGKVRDRVEVSPKISVDELEALARSSEAVLRSVGDREIVTVIVRAPKLVNIATRSRS</sequence>
<dbReference type="EC" id="6.1.1.4" evidence="1"/>
<dbReference type="EMBL" id="AE016822">
    <property type="protein sequence ID" value="AAT89083.1"/>
    <property type="molecule type" value="Genomic_DNA"/>
</dbReference>
<dbReference type="SMR" id="Q6AEW2"/>
<dbReference type="STRING" id="281090.Lxx12370"/>
<dbReference type="KEGG" id="lxx:Lxx12370"/>
<dbReference type="eggNOG" id="COG0495">
    <property type="taxonomic scope" value="Bacteria"/>
</dbReference>
<dbReference type="HOGENOM" id="CLU_004427_0_0_11"/>
<dbReference type="Proteomes" id="UP000001306">
    <property type="component" value="Chromosome"/>
</dbReference>
<dbReference type="GO" id="GO:0005829">
    <property type="term" value="C:cytosol"/>
    <property type="evidence" value="ECO:0007669"/>
    <property type="project" value="TreeGrafter"/>
</dbReference>
<dbReference type="GO" id="GO:0002161">
    <property type="term" value="F:aminoacyl-tRNA deacylase activity"/>
    <property type="evidence" value="ECO:0007669"/>
    <property type="project" value="InterPro"/>
</dbReference>
<dbReference type="GO" id="GO:0005524">
    <property type="term" value="F:ATP binding"/>
    <property type="evidence" value="ECO:0007669"/>
    <property type="project" value="UniProtKB-UniRule"/>
</dbReference>
<dbReference type="GO" id="GO:0004823">
    <property type="term" value="F:leucine-tRNA ligase activity"/>
    <property type="evidence" value="ECO:0007669"/>
    <property type="project" value="UniProtKB-UniRule"/>
</dbReference>
<dbReference type="GO" id="GO:0006429">
    <property type="term" value="P:leucyl-tRNA aminoacylation"/>
    <property type="evidence" value="ECO:0007669"/>
    <property type="project" value="UniProtKB-UniRule"/>
</dbReference>
<dbReference type="CDD" id="cd00812">
    <property type="entry name" value="LeuRS_core"/>
    <property type="match status" value="1"/>
</dbReference>
<dbReference type="FunFam" id="1.10.730.10:FF:000002">
    <property type="entry name" value="Leucine--tRNA ligase"/>
    <property type="match status" value="1"/>
</dbReference>
<dbReference type="FunFam" id="3.40.50.620:FF:000003">
    <property type="entry name" value="Leucine--tRNA ligase"/>
    <property type="match status" value="1"/>
</dbReference>
<dbReference type="FunFam" id="3.40.50.620:FF:000056">
    <property type="entry name" value="Leucine--tRNA ligase"/>
    <property type="match status" value="1"/>
</dbReference>
<dbReference type="Gene3D" id="3.10.20.590">
    <property type="match status" value="1"/>
</dbReference>
<dbReference type="Gene3D" id="3.40.50.620">
    <property type="entry name" value="HUPs"/>
    <property type="match status" value="2"/>
</dbReference>
<dbReference type="Gene3D" id="1.10.730.10">
    <property type="entry name" value="Isoleucyl-tRNA Synthetase, Domain 1"/>
    <property type="match status" value="2"/>
</dbReference>
<dbReference type="Gene3D" id="3.90.740.10">
    <property type="entry name" value="Valyl/Leucyl/Isoleucyl-tRNA synthetase, editing domain"/>
    <property type="match status" value="1"/>
</dbReference>
<dbReference type="HAMAP" id="MF_00049_B">
    <property type="entry name" value="Leu_tRNA_synth_B"/>
    <property type="match status" value="1"/>
</dbReference>
<dbReference type="InterPro" id="IPR001412">
    <property type="entry name" value="aa-tRNA-synth_I_CS"/>
</dbReference>
<dbReference type="InterPro" id="IPR002300">
    <property type="entry name" value="aa-tRNA-synth_Ia"/>
</dbReference>
<dbReference type="InterPro" id="IPR002302">
    <property type="entry name" value="Leu-tRNA-ligase"/>
</dbReference>
<dbReference type="InterPro" id="IPR025709">
    <property type="entry name" value="Leu_tRNA-synth_edit"/>
</dbReference>
<dbReference type="InterPro" id="IPR013155">
    <property type="entry name" value="M/V/L/I-tRNA-synth_anticd-bd"/>
</dbReference>
<dbReference type="InterPro" id="IPR014729">
    <property type="entry name" value="Rossmann-like_a/b/a_fold"/>
</dbReference>
<dbReference type="InterPro" id="IPR009080">
    <property type="entry name" value="tRNAsynth_Ia_anticodon-bd"/>
</dbReference>
<dbReference type="InterPro" id="IPR009008">
    <property type="entry name" value="Val/Leu/Ile-tRNA-synth_edit"/>
</dbReference>
<dbReference type="NCBIfam" id="TIGR00396">
    <property type="entry name" value="leuS_bact"/>
    <property type="match status" value="1"/>
</dbReference>
<dbReference type="PANTHER" id="PTHR43740:SF2">
    <property type="entry name" value="LEUCINE--TRNA LIGASE, MITOCHONDRIAL"/>
    <property type="match status" value="1"/>
</dbReference>
<dbReference type="PANTHER" id="PTHR43740">
    <property type="entry name" value="LEUCYL-TRNA SYNTHETASE"/>
    <property type="match status" value="1"/>
</dbReference>
<dbReference type="Pfam" id="PF08264">
    <property type="entry name" value="Anticodon_1"/>
    <property type="match status" value="1"/>
</dbReference>
<dbReference type="Pfam" id="PF00133">
    <property type="entry name" value="tRNA-synt_1"/>
    <property type="match status" value="2"/>
</dbReference>
<dbReference type="Pfam" id="PF13603">
    <property type="entry name" value="tRNA-synt_1_2"/>
    <property type="match status" value="1"/>
</dbReference>
<dbReference type="PRINTS" id="PR00985">
    <property type="entry name" value="TRNASYNTHLEU"/>
</dbReference>
<dbReference type="SUPFAM" id="SSF47323">
    <property type="entry name" value="Anticodon-binding domain of a subclass of class I aminoacyl-tRNA synthetases"/>
    <property type="match status" value="1"/>
</dbReference>
<dbReference type="SUPFAM" id="SSF52374">
    <property type="entry name" value="Nucleotidylyl transferase"/>
    <property type="match status" value="1"/>
</dbReference>
<dbReference type="SUPFAM" id="SSF50677">
    <property type="entry name" value="ValRS/IleRS/LeuRS editing domain"/>
    <property type="match status" value="1"/>
</dbReference>
<dbReference type="PROSITE" id="PS00178">
    <property type="entry name" value="AA_TRNA_LIGASE_I"/>
    <property type="match status" value="1"/>
</dbReference>
<keyword id="KW-0030">Aminoacyl-tRNA synthetase</keyword>
<keyword id="KW-0067">ATP-binding</keyword>
<keyword id="KW-0963">Cytoplasm</keyword>
<keyword id="KW-0436">Ligase</keyword>
<keyword id="KW-0547">Nucleotide-binding</keyword>
<keyword id="KW-0648">Protein biosynthesis</keyword>
<keyword id="KW-1185">Reference proteome</keyword>
<organism>
    <name type="scientific">Leifsonia xyli subsp. xyli (strain CTCB07)</name>
    <dbReference type="NCBI Taxonomy" id="281090"/>
    <lineage>
        <taxon>Bacteria</taxon>
        <taxon>Bacillati</taxon>
        <taxon>Actinomycetota</taxon>
        <taxon>Actinomycetes</taxon>
        <taxon>Micrococcales</taxon>
        <taxon>Microbacteriaceae</taxon>
        <taxon>Leifsonia</taxon>
    </lineage>
</organism>
<protein>
    <recommendedName>
        <fullName evidence="1">Leucine--tRNA ligase</fullName>
        <ecNumber evidence="1">6.1.1.4</ecNumber>
    </recommendedName>
    <alternativeName>
        <fullName evidence="1">Leucyl-tRNA synthetase</fullName>
        <shortName evidence="1">LeuRS</shortName>
    </alternativeName>
</protein>
<evidence type="ECO:0000255" key="1">
    <source>
        <dbReference type="HAMAP-Rule" id="MF_00049"/>
    </source>
</evidence>
<evidence type="ECO:0000256" key="2">
    <source>
        <dbReference type="SAM" id="MobiDB-lite"/>
    </source>
</evidence>